<gene>
    <name type="primary">mdcB</name>
    <name type="synonym">madG</name>
</gene>
<protein>
    <recommendedName>
        <fullName>Probable 2-(5''-triphosphoribosyl)-3'-dephosphocoenzyme-A synthase</fullName>
        <shortName>2-(5''-triphosphoribosyl)-3'-dephospho-CoA synthase</shortName>
        <ecNumber>2.4.2.52</ecNumber>
    </recommendedName>
</protein>
<dbReference type="EC" id="2.4.2.52"/>
<dbReference type="EMBL" id="U87980">
    <property type="protein sequence ID" value="AAC45398.1"/>
    <property type="molecule type" value="Genomic_DNA"/>
</dbReference>
<dbReference type="GO" id="GO:0005524">
    <property type="term" value="F:ATP binding"/>
    <property type="evidence" value="ECO:0007669"/>
    <property type="project" value="UniProtKB-KW"/>
</dbReference>
<dbReference type="GO" id="GO:0046917">
    <property type="term" value="F:triphosphoribosyl-dephospho-CoA synthase activity"/>
    <property type="evidence" value="ECO:0007669"/>
    <property type="project" value="UniProtKB-EC"/>
</dbReference>
<dbReference type="GO" id="GO:0051191">
    <property type="term" value="P:prosthetic group biosynthetic process"/>
    <property type="evidence" value="ECO:0007669"/>
    <property type="project" value="TreeGrafter"/>
</dbReference>
<dbReference type="Gene3D" id="1.10.4200.10">
    <property type="entry name" value="Triphosphoribosyl-dephospho-CoA protein"/>
    <property type="match status" value="1"/>
</dbReference>
<dbReference type="InterPro" id="IPR002736">
    <property type="entry name" value="CitG"/>
</dbReference>
<dbReference type="PANTHER" id="PTHR30201:SF2">
    <property type="entry name" value="2-(5''-TRIPHOSPHORIBOSYL)-3'-DEPHOSPHOCOENZYME-A SYNTHASE"/>
    <property type="match status" value="1"/>
</dbReference>
<dbReference type="PANTHER" id="PTHR30201">
    <property type="entry name" value="TRIPHOSPHORIBOSYL-DEPHOSPHO-COA SYNTHASE"/>
    <property type="match status" value="1"/>
</dbReference>
<dbReference type="Pfam" id="PF01874">
    <property type="entry name" value="CitG"/>
    <property type="match status" value="1"/>
</dbReference>
<comment type="function">
    <text>Involved in the formation of 2-(5''-phosphoribosyl)-3'-dephosphocoenzyme-A, the prosthetic group of the acyl-carrier protein of the malonate decarboxylase.</text>
</comment>
<comment type="catalytic activity">
    <reaction>
        <text>3'-dephospho-CoA + ATP = 2'-(5''-triphospho-alpha-D-ribosyl)-3'-dephospho-CoA + adenine</text>
        <dbReference type="Rhea" id="RHEA:15117"/>
        <dbReference type="ChEBI" id="CHEBI:16708"/>
        <dbReference type="ChEBI" id="CHEBI:30616"/>
        <dbReference type="ChEBI" id="CHEBI:57328"/>
        <dbReference type="ChEBI" id="CHEBI:61378"/>
        <dbReference type="EC" id="2.4.2.52"/>
    </reaction>
</comment>
<comment type="similarity">
    <text evidence="1">Belongs to the CitG/MdcB family.</text>
</comment>
<accession>O06922</accession>
<sequence>MVARGNVVSIGQIAPKHSSEVSFSVDPVSWEIGSLLQRGMLLEVATSNKPGLVCPQSNGCHEDMSLMTFMVSSSVIFPALVMCTQAGRDHEGDLPLLLPVVRGIGAPYEKELFAATKGVNTQKGALFSAAILAGAAGYLSQKSRHFQIGELFEVVAAMTKGIVRRELNPSVLEKKESLSNGEKLYLRHQVPGIRGELERGLPSVRDYAVPALKYAQDLGASLEASFLHTLITLMSQVDDTNIISRGGLESLKKVKTLSKEVLKEGSIFNKEGIDNYFYLENFCIDRGLSPGGSADLLAITISAYLLSEEKFKCKIM</sequence>
<feature type="chain" id="PRO_0000214672" description="Probable 2-(5''-triphosphoribosyl)-3'-dephosphocoenzyme-A synthase">
    <location>
        <begin position="1"/>
        <end position="316"/>
    </location>
</feature>
<reference key="1">
    <citation type="journal article" date="1997" name="Eur. J. Biochem.">
        <title>Sequence of a gene cluster from Malonomonas rubra encoding components of the malonate decarboxylase Na+ pump and evidence for their function.</title>
        <authorList>
            <person name="Berg M."/>
            <person name="Hilbi H."/>
            <person name="Dimroth P."/>
        </authorList>
    </citation>
    <scope>NUCLEOTIDE SEQUENCE [GENOMIC DNA]</scope>
</reference>
<evidence type="ECO:0000305" key="1"/>
<proteinExistence type="inferred from homology"/>
<keyword id="KW-0067">ATP-binding</keyword>
<keyword id="KW-0547">Nucleotide-binding</keyword>
<keyword id="KW-0808">Transferase</keyword>
<name>MDCB_MALRU</name>
<organism>
    <name type="scientific">Malonomonas rubra</name>
    <dbReference type="NCBI Taxonomy" id="57040"/>
    <lineage>
        <taxon>Bacteria</taxon>
        <taxon>Pseudomonadati</taxon>
        <taxon>Thermodesulfobacteriota</taxon>
        <taxon>Desulfuromonadia</taxon>
        <taxon>Desulfuromonadales</taxon>
        <taxon>Geopsychrobacteraceae</taxon>
        <taxon>Malonomonas</taxon>
    </lineage>
</organism>